<feature type="chain" id="PRO_1000000410" description="Argininosuccinate synthase">
    <location>
        <begin position="1"/>
        <end position="400"/>
    </location>
</feature>
<feature type="binding site" evidence="1">
    <location>
        <begin position="8"/>
        <end position="16"/>
    </location>
    <ligand>
        <name>ATP</name>
        <dbReference type="ChEBI" id="CHEBI:30616"/>
    </ligand>
</feature>
<feature type="binding site" evidence="1">
    <location>
        <position position="87"/>
    </location>
    <ligand>
        <name>L-citrulline</name>
        <dbReference type="ChEBI" id="CHEBI:57743"/>
    </ligand>
</feature>
<feature type="binding site" evidence="1">
    <location>
        <position position="117"/>
    </location>
    <ligand>
        <name>ATP</name>
        <dbReference type="ChEBI" id="CHEBI:30616"/>
    </ligand>
</feature>
<feature type="binding site" evidence="1">
    <location>
        <position position="119"/>
    </location>
    <ligand>
        <name>L-aspartate</name>
        <dbReference type="ChEBI" id="CHEBI:29991"/>
    </ligand>
</feature>
<feature type="binding site" evidence="1">
    <location>
        <position position="123"/>
    </location>
    <ligand>
        <name>L-aspartate</name>
        <dbReference type="ChEBI" id="CHEBI:29991"/>
    </ligand>
</feature>
<feature type="binding site" evidence="1">
    <location>
        <position position="123"/>
    </location>
    <ligand>
        <name>L-citrulline</name>
        <dbReference type="ChEBI" id="CHEBI:57743"/>
    </ligand>
</feature>
<feature type="binding site" evidence="1">
    <location>
        <position position="124"/>
    </location>
    <ligand>
        <name>L-aspartate</name>
        <dbReference type="ChEBI" id="CHEBI:29991"/>
    </ligand>
</feature>
<feature type="binding site" evidence="1">
    <location>
        <position position="127"/>
    </location>
    <ligand>
        <name>L-citrulline</name>
        <dbReference type="ChEBI" id="CHEBI:57743"/>
    </ligand>
</feature>
<feature type="binding site" evidence="1">
    <location>
        <position position="175"/>
    </location>
    <ligand>
        <name>L-citrulline</name>
        <dbReference type="ChEBI" id="CHEBI:57743"/>
    </ligand>
</feature>
<feature type="binding site" evidence="1">
    <location>
        <position position="260"/>
    </location>
    <ligand>
        <name>L-citrulline</name>
        <dbReference type="ChEBI" id="CHEBI:57743"/>
    </ligand>
</feature>
<feature type="binding site" evidence="1">
    <location>
        <position position="272"/>
    </location>
    <ligand>
        <name>L-citrulline</name>
        <dbReference type="ChEBI" id="CHEBI:57743"/>
    </ligand>
</feature>
<protein>
    <recommendedName>
        <fullName evidence="1">Argininosuccinate synthase</fullName>
        <ecNumber evidence="1">6.3.4.5</ecNumber>
    </recommendedName>
    <alternativeName>
        <fullName evidence="1">Citrulline--aspartate ligase</fullName>
    </alternativeName>
</protein>
<keyword id="KW-0028">Amino-acid biosynthesis</keyword>
<keyword id="KW-0055">Arginine biosynthesis</keyword>
<keyword id="KW-0067">ATP-binding</keyword>
<keyword id="KW-0963">Cytoplasm</keyword>
<keyword id="KW-0436">Ligase</keyword>
<keyword id="KW-0547">Nucleotide-binding</keyword>
<dbReference type="EC" id="6.3.4.5" evidence="1"/>
<dbReference type="EMBL" id="CP000518">
    <property type="protein sequence ID" value="ABL92204.1"/>
    <property type="molecule type" value="Genomic_DNA"/>
</dbReference>
<dbReference type="SMR" id="A1UH96"/>
<dbReference type="STRING" id="189918.Mkms_3010"/>
<dbReference type="KEGG" id="mkm:Mkms_3010"/>
<dbReference type="HOGENOM" id="CLU_032784_4_2_11"/>
<dbReference type="OrthoDB" id="9801641at2"/>
<dbReference type="UniPathway" id="UPA00068">
    <property type="reaction ID" value="UER00113"/>
</dbReference>
<dbReference type="GO" id="GO:0005737">
    <property type="term" value="C:cytoplasm"/>
    <property type="evidence" value="ECO:0007669"/>
    <property type="project" value="UniProtKB-SubCell"/>
</dbReference>
<dbReference type="GO" id="GO:0004055">
    <property type="term" value="F:argininosuccinate synthase activity"/>
    <property type="evidence" value="ECO:0007669"/>
    <property type="project" value="UniProtKB-UniRule"/>
</dbReference>
<dbReference type="GO" id="GO:0005524">
    <property type="term" value="F:ATP binding"/>
    <property type="evidence" value="ECO:0007669"/>
    <property type="project" value="UniProtKB-UniRule"/>
</dbReference>
<dbReference type="GO" id="GO:0000053">
    <property type="term" value="P:argininosuccinate metabolic process"/>
    <property type="evidence" value="ECO:0007669"/>
    <property type="project" value="TreeGrafter"/>
</dbReference>
<dbReference type="GO" id="GO:0006526">
    <property type="term" value="P:L-arginine biosynthetic process"/>
    <property type="evidence" value="ECO:0007669"/>
    <property type="project" value="UniProtKB-UniRule"/>
</dbReference>
<dbReference type="GO" id="GO:0000050">
    <property type="term" value="P:urea cycle"/>
    <property type="evidence" value="ECO:0007669"/>
    <property type="project" value="TreeGrafter"/>
</dbReference>
<dbReference type="CDD" id="cd01999">
    <property type="entry name" value="ASS"/>
    <property type="match status" value="1"/>
</dbReference>
<dbReference type="FunFam" id="3.40.50.620:FF:000038">
    <property type="entry name" value="Argininosuccinate synthase"/>
    <property type="match status" value="1"/>
</dbReference>
<dbReference type="FunFam" id="3.90.1260.10:FF:000006">
    <property type="entry name" value="Argininosuccinate synthase"/>
    <property type="match status" value="1"/>
</dbReference>
<dbReference type="Gene3D" id="3.90.1260.10">
    <property type="entry name" value="Argininosuccinate synthetase, chain A, domain 2"/>
    <property type="match status" value="1"/>
</dbReference>
<dbReference type="Gene3D" id="3.40.50.620">
    <property type="entry name" value="HUPs"/>
    <property type="match status" value="1"/>
</dbReference>
<dbReference type="Gene3D" id="1.20.5.470">
    <property type="entry name" value="Single helix bin"/>
    <property type="match status" value="1"/>
</dbReference>
<dbReference type="HAMAP" id="MF_00005">
    <property type="entry name" value="Arg_succ_synth_type1"/>
    <property type="match status" value="1"/>
</dbReference>
<dbReference type="InterPro" id="IPR048268">
    <property type="entry name" value="Arginosuc_syn_C"/>
</dbReference>
<dbReference type="InterPro" id="IPR048267">
    <property type="entry name" value="Arginosuc_syn_N"/>
</dbReference>
<dbReference type="InterPro" id="IPR001518">
    <property type="entry name" value="Arginosuc_synth"/>
</dbReference>
<dbReference type="InterPro" id="IPR018223">
    <property type="entry name" value="Arginosuc_synth_CS"/>
</dbReference>
<dbReference type="InterPro" id="IPR023434">
    <property type="entry name" value="Arginosuc_synth_type_1_subfam"/>
</dbReference>
<dbReference type="InterPro" id="IPR024074">
    <property type="entry name" value="AS_cat/multimer_dom_body"/>
</dbReference>
<dbReference type="InterPro" id="IPR014729">
    <property type="entry name" value="Rossmann-like_a/b/a_fold"/>
</dbReference>
<dbReference type="NCBIfam" id="TIGR00032">
    <property type="entry name" value="argG"/>
    <property type="match status" value="1"/>
</dbReference>
<dbReference type="NCBIfam" id="NF001770">
    <property type="entry name" value="PRK00509.1"/>
    <property type="match status" value="1"/>
</dbReference>
<dbReference type="PANTHER" id="PTHR11587">
    <property type="entry name" value="ARGININOSUCCINATE SYNTHASE"/>
    <property type="match status" value="1"/>
</dbReference>
<dbReference type="PANTHER" id="PTHR11587:SF2">
    <property type="entry name" value="ARGININOSUCCINATE SYNTHASE"/>
    <property type="match status" value="1"/>
</dbReference>
<dbReference type="Pfam" id="PF20979">
    <property type="entry name" value="Arginosuc_syn_C"/>
    <property type="match status" value="1"/>
</dbReference>
<dbReference type="Pfam" id="PF00764">
    <property type="entry name" value="Arginosuc_synth"/>
    <property type="match status" value="1"/>
</dbReference>
<dbReference type="SUPFAM" id="SSF52402">
    <property type="entry name" value="Adenine nucleotide alpha hydrolases-like"/>
    <property type="match status" value="1"/>
</dbReference>
<dbReference type="SUPFAM" id="SSF69864">
    <property type="entry name" value="Argininosuccinate synthetase, C-terminal domain"/>
    <property type="match status" value="1"/>
</dbReference>
<dbReference type="PROSITE" id="PS00564">
    <property type="entry name" value="ARGININOSUCCIN_SYN_1"/>
    <property type="match status" value="1"/>
</dbReference>
<dbReference type="PROSITE" id="PS00565">
    <property type="entry name" value="ARGININOSUCCIN_SYN_2"/>
    <property type="match status" value="1"/>
</dbReference>
<organism>
    <name type="scientific">Mycobacterium sp. (strain KMS)</name>
    <dbReference type="NCBI Taxonomy" id="189918"/>
    <lineage>
        <taxon>Bacteria</taxon>
        <taxon>Bacillati</taxon>
        <taxon>Actinomycetota</taxon>
        <taxon>Actinomycetes</taxon>
        <taxon>Mycobacteriales</taxon>
        <taxon>Mycobacteriaceae</taxon>
        <taxon>Mycobacterium</taxon>
    </lineage>
</organism>
<gene>
    <name evidence="1" type="primary">argG</name>
    <name type="ordered locus">Mkms_3010</name>
</gene>
<reference key="1">
    <citation type="submission" date="2006-12" db="EMBL/GenBank/DDBJ databases">
        <title>Complete sequence of chromosome of Mycobacterium sp. KMS.</title>
        <authorList>
            <consortium name="US DOE Joint Genome Institute"/>
            <person name="Copeland A."/>
            <person name="Lucas S."/>
            <person name="Lapidus A."/>
            <person name="Barry K."/>
            <person name="Detter J.C."/>
            <person name="Glavina del Rio T."/>
            <person name="Hammon N."/>
            <person name="Israni S."/>
            <person name="Dalin E."/>
            <person name="Tice H."/>
            <person name="Pitluck S."/>
            <person name="Kiss H."/>
            <person name="Brettin T."/>
            <person name="Bruce D."/>
            <person name="Han C."/>
            <person name="Tapia R."/>
            <person name="Gilna P."/>
            <person name="Schmutz J."/>
            <person name="Larimer F."/>
            <person name="Land M."/>
            <person name="Hauser L."/>
            <person name="Kyrpides N."/>
            <person name="Mikhailova N."/>
            <person name="Miller C.D."/>
            <person name="Richardson P."/>
        </authorList>
    </citation>
    <scope>NUCLEOTIDE SEQUENCE [LARGE SCALE GENOMIC DNA]</scope>
    <source>
        <strain>KMS</strain>
    </source>
</reference>
<name>ASSY_MYCSK</name>
<proteinExistence type="inferred from homology"/>
<comment type="catalytic activity">
    <reaction evidence="1">
        <text>L-citrulline + L-aspartate + ATP = 2-(N(omega)-L-arginino)succinate + AMP + diphosphate + H(+)</text>
        <dbReference type="Rhea" id="RHEA:10932"/>
        <dbReference type="ChEBI" id="CHEBI:15378"/>
        <dbReference type="ChEBI" id="CHEBI:29991"/>
        <dbReference type="ChEBI" id="CHEBI:30616"/>
        <dbReference type="ChEBI" id="CHEBI:33019"/>
        <dbReference type="ChEBI" id="CHEBI:57472"/>
        <dbReference type="ChEBI" id="CHEBI:57743"/>
        <dbReference type="ChEBI" id="CHEBI:456215"/>
        <dbReference type="EC" id="6.3.4.5"/>
    </reaction>
</comment>
<comment type="pathway">
    <text evidence="1">Amino-acid biosynthesis; L-arginine biosynthesis; L-arginine from L-ornithine and carbamoyl phosphate: step 2/3.</text>
</comment>
<comment type="subunit">
    <text evidence="1">Homotetramer.</text>
</comment>
<comment type="subcellular location">
    <subcellularLocation>
        <location evidence="1">Cytoplasm</location>
    </subcellularLocation>
</comment>
<comment type="similarity">
    <text evidence="1">Belongs to the argininosuccinate synthase family. Type 1 subfamily.</text>
</comment>
<accession>A1UH96</accession>
<sequence length="400" mass="44050">MSERVILAYSGGLDTSVAISWIGKETGREVVAVAIDLGQGGEDMDVVRQRALDCGAVEAVVIDARDEFAEDYCLPAIQSNALYMDRYPLVSALSRPLIVKHLVDAAREHKGGIVAHGCTGKGNDQVRFEVGFASLAPDLEVLAPVRDYAWTREKAIAFAEENAIPINVTKRSPFSIDQNVWGRAVETGFLEHLWNAPTKDVYDYTEDPTLNWSTPDEVIVGFDKGVPVSIDGRDVTVLQAIEELNRRAGAQGVGRLDVVEDRLVGIKSREIYEAPGAMVLITAHTELEHVTLERELGRFKRTTDQKWGELVYDGLWFSPLKTALESFVAKTQEHVSGEIRLVLHGGHIAVNGRRSQESLYDFNLATYDEGDTFDQSSAKGFVHVHGLSSSISARRDLGIK</sequence>
<evidence type="ECO:0000255" key="1">
    <source>
        <dbReference type="HAMAP-Rule" id="MF_00005"/>
    </source>
</evidence>